<evidence type="ECO:0000250" key="1">
    <source>
        <dbReference type="UniProtKB" id="A1T557"/>
    </source>
</evidence>
<evidence type="ECO:0000250" key="2">
    <source>
        <dbReference type="UniProtKB" id="O15503"/>
    </source>
</evidence>
<evidence type="ECO:0000250" key="3">
    <source>
        <dbReference type="UniProtKB" id="Q9Y5U4"/>
    </source>
</evidence>
<evidence type="ECO:0000305" key="4"/>
<feature type="chain" id="PRO_0000287391" description="Insulin-induced gene 1 protein">
    <location>
        <begin position="1"/>
        <end position="251"/>
    </location>
</feature>
<feature type="topological domain" description="Cytoplasmic" evidence="2">
    <location>
        <begin position="1"/>
        <end position="58"/>
    </location>
</feature>
<feature type="transmembrane region" description="Helical; Name=1" evidence="1">
    <location>
        <begin position="59"/>
        <end position="81"/>
    </location>
</feature>
<feature type="topological domain" description="Extracellular" evidence="4">
    <location>
        <begin position="82"/>
        <end position="100"/>
    </location>
</feature>
<feature type="transmembrane region" description="Helical; Name=2" evidence="1">
    <location>
        <begin position="101"/>
        <end position="118"/>
    </location>
</feature>
<feature type="topological domain" description="Cytoplasmic" evidence="4">
    <location>
        <begin position="119"/>
        <end position="133"/>
    </location>
</feature>
<feature type="transmembrane region" description="Helical; Name=3" evidence="1">
    <location>
        <begin position="134"/>
        <end position="156"/>
    </location>
</feature>
<feature type="topological domain" description="Extracellular" evidence="4">
    <location>
        <begin position="157"/>
        <end position="159"/>
    </location>
</feature>
<feature type="transmembrane region" description="Helical; Name=4" evidence="1">
    <location>
        <begin position="160"/>
        <end position="178"/>
    </location>
</feature>
<feature type="topological domain" description="Cytoplasmic" evidence="2">
    <location>
        <begin position="179"/>
        <end position="183"/>
    </location>
</feature>
<feature type="transmembrane region" description="Helical; Name=5" evidence="1">
    <location>
        <begin position="184"/>
        <end position="205"/>
    </location>
</feature>
<feature type="topological domain" description="Extracellular" evidence="4">
    <location>
        <begin position="206"/>
        <end position="219"/>
    </location>
</feature>
<feature type="transmembrane region" description="Helical; Name=6" evidence="1">
    <location>
        <begin position="220"/>
        <end position="237"/>
    </location>
</feature>
<feature type="topological domain" description="Cytoplasmic" evidence="2">
    <location>
        <begin position="238"/>
        <end position="251"/>
    </location>
</feature>
<feature type="short sequence motif" description="KxHxx" evidence="2">
    <location>
        <begin position="245"/>
        <end position="251"/>
    </location>
</feature>
<feature type="site" description="Required for the recognition of 25-hydroxycholesterol" evidence="3">
    <location>
        <position position="145"/>
    </location>
</feature>
<organism>
    <name type="scientific">Xenopus tropicalis</name>
    <name type="common">Western clawed frog</name>
    <name type="synonym">Silurana tropicalis</name>
    <dbReference type="NCBI Taxonomy" id="8364"/>
    <lineage>
        <taxon>Eukaryota</taxon>
        <taxon>Metazoa</taxon>
        <taxon>Chordata</taxon>
        <taxon>Craniata</taxon>
        <taxon>Vertebrata</taxon>
        <taxon>Euteleostomi</taxon>
        <taxon>Amphibia</taxon>
        <taxon>Batrachia</taxon>
        <taxon>Anura</taxon>
        <taxon>Pipoidea</taxon>
        <taxon>Pipidae</taxon>
        <taxon>Xenopodinae</taxon>
        <taxon>Xenopus</taxon>
        <taxon>Silurana</taxon>
    </lineage>
</organism>
<reference key="1">
    <citation type="submission" date="2006-08" db="EMBL/GenBank/DDBJ databases">
        <authorList>
            <consortium name="NIH - Xenopus Gene Collection (XGC) project"/>
        </authorList>
    </citation>
    <scope>NUCLEOTIDE SEQUENCE [LARGE SCALE MRNA]</scope>
    <source>
        <strain>N6</strain>
        <tissue>Liver</tissue>
    </source>
</reference>
<comment type="function">
    <text evidence="2">Oxysterol-binding protein that mediates feedback control of cholesterol synthesis by controlling both endoplasmic reticulum to Golgi transport of scap and degradation of hmgcr. Acts as a negative regulator of cholesterol biosynthesis by mediating the retention of the SCAP-SREBP complex in the endoplasmic reticulum, thereby blocking the processing of sterol regulatory element-binding proteins (SREBPs). Binds oxysterol, including 25-hydroxycholesterol, regulating interaction with scap and retention of the SCAP-SREBP complex in the endoplasmic reticulum. In presence of oxysterol, interacts with scap, retaining the SCAP-SREBP complex in the endoplasmic reticulum, thereby preventing scap from escorting SREBPs to the Golgi. Sterol deprivation reduces oxysterol-binding, disrupting the interaction between insig1 and scap, thereby promoting Golgi transport of the SCAP-SREBP complex, followed by processing and nuclear translocation of SREBPs. Also regulates cholesterol synthesis by regulating degradation of hmgcr.</text>
</comment>
<comment type="subunit">
    <text evidence="2">Interacts with scap; interaction is direct and only takes place in the presence of sterols; it prevents interaction between scap and the coat protein complex II (COPII). Associates with the SCAP-SREBP complex; association is mediated via its interaction with scap and only takes place in the presence of sterols.</text>
</comment>
<comment type="subcellular location">
    <subcellularLocation>
        <location evidence="2">Endoplasmic reticulum membrane</location>
        <topology evidence="2">Multi-pass membrane protein</topology>
    </subcellularLocation>
</comment>
<comment type="domain">
    <text evidence="2">The KxHxx motif mediates association with the coatomer complex.</text>
</comment>
<comment type="domain">
    <text evidence="3">Binds oxysterols in a pocket within their transmembrane domains and interacts with SCAP via transmembrane domains 3 and 4.</text>
</comment>
<comment type="similarity">
    <text evidence="4">Belongs to the INSIG family.</text>
</comment>
<protein>
    <recommendedName>
        <fullName evidence="2">Insulin-induced gene 1 protein</fullName>
        <shortName evidence="2">INSIG-1</shortName>
    </recommendedName>
</protein>
<dbReference type="EMBL" id="BC121578">
    <property type="protein sequence ID" value="AAI21579.1"/>
    <property type="molecule type" value="mRNA"/>
</dbReference>
<dbReference type="RefSeq" id="NP_001072938.1">
    <property type="nucleotide sequence ID" value="NM_001079470.1"/>
</dbReference>
<dbReference type="RefSeq" id="XP_012820421.1">
    <property type="nucleotide sequence ID" value="XM_012964967.3"/>
</dbReference>
<dbReference type="SMR" id="Q0V9G6"/>
<dbReference type="FunCoup" id="Q0V9G6">
    <property type="interactions" value="486"/>
</dbReference>
<dbReference type="STRING" id="8364.ENSXETP00000041084"/>
<dbReference type="PaxDb" id="8364-ENSXETP00000029557"/>
<dbReference type="DNASU" id="780766"/>
<dbReference type="GeneID" id="780766"/>
<dbReference type="KEGG" id="xtr:780766"/>
<dbReference type="AGR" id="Xenbase:XB-GENE-487039"/>
<dbReference type="CTD" id="3638"/>
<dbReference type="Xenbase" id="XB-GENE-487039">
    <property type="gene designation" value="insig1"/>
</dbReference>
<dbReference type="eggNOG" id="KOG4363">
    <property type="taxonomic scope" value="Eukaryota"/>
</dbReference>
<dbReference type="HOGENOM" id="CLU_092922_0_0_1"/>
<dbReference type="InParanoid" id="Q0V9G6"/>
<dbReference type="OMA" id="ENHTWSC"/>
<dbReference type="OrthoDB" id="205546at2759"/>
<dbReference type="PhylomeDB" id="Q0V9G6"/>
<dbReference type="TreeFam" id="TF331013"/>
<dbReference type="Proteomes" id="UP000008143">
    <property type="component" value="Chromosome 6"/>
</dbReference>
<dbReference type="Bgee" id="ENSXETG00000013492">
    <property type="expression patterns" value="Expressed in liver and 13 other cell types or tissues"/>
</dbReference>
<dbReference type="ExpressionAtlas" id="Q0V9G6">
    <property type="expression patterns" value="baseline and differential"/>
</dbReference>
<dbReference type="GO" id="GO:0005789">
    <property type="term" value="C:endoplasmic reticulum membrane"/>
    <property type="evidence" value="ECO:0007669"/>
    <property type="project" value="UniProtKB-SubCell"/>
</dbReference>
<dbReference type="GO" id="GO:0008142">
    <property type="term" value="F:oxysterol binding"/>
    <property type="evidence" value="ECO:0000250"/>
    <property type="project" value="UniProtKB"/>
</dbReference>
<dbReference type="GO" id="GO:0008203">
    <property type="term" value="P:cholesterol metabolic process"/>
    <property type="evidence" value="ECO:0007669"/>
    <property type="project" value="UniProtKB-KW"/>
</dbReference>
<dbReference type="InterPro" id="IPR025929">
    <property type="entry name" value="INSIG_fam"/>
</dbReference>
<dbReference type="PANTHER" id="PTHR15301">
    <property type="entry name" value="INSULIN-INDUCED GENE 1"/>
    <property type="match status" value="1"/>
</dbReference>
<dbReference type="PANTHER" id="PTHR15301:SF11">
    <property type="entry name" value="INSULIN-INDUCED GENE 1 PROTEIN"/>
    <property type="match status" value="1"/>
</dbReference>
<dbReference type="Pfam" id="PF07281">
    <property type="entry name" value="INSIG"/>
    <property type="match status" value="1"/>
</dbReference>
<proteinExistence type="evidence at transcript level"/>
<name>INSI1_XENTR</name>
<sequence length="251" mass="27658">MQTLEEHCWSCSCTRGRDKKGTRLSTWLAQRAAKAMSSLNSLLSLAYHTLASSEGRSLIRRSLVLFAVGVFLALVLNLLQIQRNVTLFPEEVIATIFSSAWWVPPCCGTAAAVVGLLYPCIDSHLGEPHKFKREWASVMRCIAVFVGINHASAKLDFANNVQLSLTLAALSLGLWWTFDRSRSGLGLGITIAFLATLITQFLVYNGVYQYTSPDFLYIRSWLPCIFFSGGVTVGNIGRQLAMGSSEKTHSD</sequence>
<keyword id="KW-0153">Cholesterol metabolism</keyword>
<keyword id="KW-0256">Endoplasmic reticulum</keyword>
<keyword id="KW-0443">Lipid metabolism</keyword>
<keyword id="KW-0446">Lipid-binding</keyword>
<keyword id="KW-0472">Membrane</keyword>
<keyword id="KW-1185">Reference proteome</keyword>
<keyword id="KW-0753">Steroid metabolism</keyword>
<keyword id="KW-1207">Sterol metabolism</keyword>
<keyword id="KW-0812">Transmembrane</keyword>
<keyword id="KW-1133">Transmembrane helix</keyword>
<accession>Q0V9G6</accession>
<gene>
    <name evidence="2" type="primary">insig1</name>
</gene>